<name>KAR5_YARLI</name>
<gene>
    <name type="primary">KAR5</name>
    <name type="ordered locus">YALI0D12947g</name>
</gene>
<sequence>MSLSYSFNTTIFTENRDLVAALQPQTNCARTALTLIVSDCGKLSSFNEDQQLRVSLAVGLAVCEFKAAQVTYPDACNNIEDWMSTSACTQQLVSSPQWWTTYHGCYNSVKQICHMHEASRECDRALKTHSQIVDMQEKLHTKMDQYWELVETMSDHRDAVLDYWNDTFDFMSETLAHMKETSVSLNAVYRDNFAQAQEHFQMLSENLQEARVQMENLGWAAQDAVVSLSKSTLAEQSLVSERLKNDASSLHKLLVLAHQDTTESFETQLQQSLTILVESSDNVLLNHVQQVSSRLSALMSDLEESQKKNMDMQHQLQQKVRTINDDIEGFTDTVKQGLEASHSLLNLVKSKIQLVNGVVSIFSRPVRSAFQLASFIIMIRAAFIGGIYTSIGLVMGSMLGVLVMQQV</sequence>
<evidence type="ECO:0000250" key="1"/>
<evidence type="ECO:0000255" key="2"/>
<evidence type="ECO:0000305" key="3"/>
<organism>
    <name type="scientific">Yarrowia lipolytica (strain CLIB 122 / E 150)</name>
    <name type="common">Yeast</name>
    <name type="synonym">Candida lipolytica</name>
    <dbReference type="NCBI Taxonomy" id="284591"/>
    <lineage>
        <taxon>Eukaryota</taxon>
        <taxon>Fungi</taxon>
        <taxon>Dikarya</taxon>
        <taxon>Ascomycota</taxon>
        <taxon>Saccharomycotina</taxon>
        <taxon>Dipodascomycetes</taxon>
        <taxon>Dipodascales</taxon>
        <taxon>Dipodascales incertae sedis</taxon>
        <taxon>Yarrowia</taxon>
    </lineage>
</organism>
<proteinExistence type="inferred from homology"/>
<keyword id="KW-0256">Endoplasmic reticulum</keyword>
<keyword id="KW-0325">Glycoprotein</keyword>
<keyword id="KW-0415">Karyogamy</keyword>
<keyword id="KW-0472">Membrane</keyword>
<keyword id="KW-0539">Nucleus</keyword>
<keyword id="KW-1185">Reference proteome</keyword>
<keyword id="KW-0732">Signal</keyword>
<keyword id="KW-0812">Transmembrane</keyword>
<keyword id="KW-1133">Transmembrane helix</keyword>
<protein>
    <recommendedName>
        <fullName>Nuclear fusion protein KAR5</fullName>
    </recommendedName>
    <alternativeName>
        <fullName>Karyogamy protein 5</fullName>
    </alternativeName>
</protein>
<reference key="1">
    <citation type="journal article" date="2004" name="Nature">
        <title>Genome evolution in yeasts.</title>
        <authorList>
            <person name="Dujon B."/>
            <person name="Sherman D."/>
            <person name="Fischer G."/>
            <person name="Durrens P."/>
            <person name="Casaregola S."/>
            <person name="Lafontaine I."/>
            <person name="de Montigny J."/>
            <person name="Marck C."/>
            <person name="Neuveglise C."/>
            <person name="Talla E."/>
            <person name="Goffard N."/>
            <person name="Frangeul L."/>
            <person name="Aigle M."/>
            <person name="Anthouard V."/>
            <person name="Babour A."/>
            <person name="Barbe V."/>
            <person name="Barnay S."/>
            <person name="Blanchin S."/>
            <person name="Beckerich J.-M."/>
            <person name="Beyne E."/>
            <person name="Bleykasten C."/>
            <person name="Boisrame A."/>
            <person name="Boyer J."/>
            <person name="Cattolico L."/>
            <person name="Confanioleri F."/>
            <person name="de Daruvar A."/>
            <person name="Despons L."/>
            <person name="Fabre E."/>
            <person name="Fairhead C."/>
            <person name="Ferry-Dumazet H."/>
            <person name="Groppi A."/>
            <person name="Hantraye F."/>
            <person name="Hennequin C."/>
            <person name="Jauniaux N."/>
            <person name="Joyet P."/>
            <person name="Kachouri R."/>
            <person name="Kerrest A."/>
            <person name="Koszul R."/>
            <person name="Lemaire M."/>
            <person name="Lesur I."/>
            <person name="Ma L."/>
            <person name="Muller H."/>
            <person name="Nicaud J.-M."/>
            <person name="Nikolski M."/>
            <person name="Oztas S."/>
            <person name="Ozier-Kalogeropoulos O."/>
            <person name="Pellenz S."/>
            <person name="Potier S."/>
            <person name="Richard G.-F."/>
            <person name="Straub M.-L."/>
            <person name="Suleau A."/>
            <person name="Swennen D."/>
            <person name="Tekaia F."/>
            <person name="Wesolowski-Louvel M."/>
            <person name="Westhof E."/>
            <person name="Wirth B."/>
            <person name="Zeniou-Meyer M."/>
            <person name="Zivanovic Y."/>
            <person name="Bolotin-Fukuhara M."/>
            <person name="Thierry A."/>
            <person name="Bouchier C."/>
            <person name="Caudron B."/>
            <person name="Scarpelli C."/>
            <person name="Gaillardin C."/>
            <person name="Weissenbach J."/>
            <person name="Wincker P."/>
            <person name="Souciet J.-L."/>
        </authorList>
    </citation>
    <scope>NUCLEOTIDE SEQUENCE [LARGE SCALE GENOMIC DNA]</scope>
    <source>
        <strain>CLIB 122 / E 150</strain>
    </source>
</reference>
<accession>Q6C994</accession>
<comment type="function">
    <text evidence="1">Required for nuclear membrane fusion during karyogamy.</text>
</comment>
<comment type="subcellular location">
    <subcellularLocation>
        <location evidence="1">Endoplasmic reticulum membrane</location>
        <topology evidence="1">Single-pass membrane protein</topology>
    </subcellularLocation>
    <subcellularLocation>
        <location evidence="1">Nucleus membrane</location>
        <topology evidence="1">Single-pass membrane protein</topology>
    </subcellularLocation>
</comment>
<comment type="similarity">
    <text evidence="3">Belongs to the KAR5 family.</text>
</comment>
<feature type="signal peptide" evidence="2">
    <location>
        <begin position="1"/>
        <end position="29"/>
    </location>
</feature>
<feature type="chain" id="PRO_0000308776" description="Nuclear fusion protein KAR5">
    <location>
        <begin position="30"/>
        <end position="407"/>
    </location>
</feature>
<feature type="topological domain" description="Lumenal" evidence="1">
    <location>
        <begin position="30"/>
        <end position="382"/>
    </location>
</feature>
<feature type="transmembrane region" description="Helical" evidence="2">
    <location>
        <begin position="383"/>
        <end position="403"/>
    </location>
</feature>
<feature type="topological domain" description="Cytoplasmic" evidence="1">
    <location>
        <begin position="404"/>
        <end position="407"/>
    </location>
</feature>
<feature type="glycosylation site" description="N-linked (GlcNAc...) asparagine" evidence="2">
    <location>
        <position position="165"/>
    </location>
</feature>
<dbReference type="EMBL" id="CR382130">
    <property type="protein sequence ID" value="CAG80956.1"/>
    <property type="molecule type" value="Genomic_DNA"/>
</dbReference>
<dbReference type="RefSeq" id="XP_502768.1">
    <property type="nucleotide sequence ID" value="XM_502768.1"/>
</dbReference>
<dbReference type="SMR" id="Q6C994"/>
<dbReference type="FunCoup" id="Q6C994">
    <property type="interactions" value="24"/>
</dbReference>
<dbReference type="GlyCosmos" id="Q6C994">
    <property type="glycosylation" value="1 site, No reported glycans"/>
</dbReference>
<dbReference type="EnsemblFungi" id="CAG80956">
    <property type="protein sequence ID" value="CAG80956"/>
    <property type="gene ID" value="YALI0_D12947g"/>
</dbReference>
<dbReference type="KEGG" id="yli:2911268"/>
<dbReference type="VEuPathDB" id="FungiDB:YALI0_D12947g"/>
<dbReference type="HOGENOM" id="CLU_039530_0_0_1"/>
<dbReference type="InParanoid" id="Q6C994"/>
<dbReference type="OMA" id="WWISFAS"/>
<dbReference type="Proteomes" id="UP000001300">
    <property type="component" value="Chromosome D"/>
</dbReference>
<dbReference type="GO" id="GO:0005789">
    <property type="term" value="C:endoplasmic reticulum membrane"/>
    <property type="evidence" value="ECO:0000318"/>
    <property type="project" value="GO_Central"/>
</dbReference>
<dbReference type="GO" id="GO:0031965">
    <property type="term" value="C:nuclear membrane"/>
    <property type="evidence" value="ECO:0007669"/>
    <property type="project" value="UniProtKB-SubCell"/>
</dbReference>
<dbReference type="GO" id="GO:0000742">
    <property type="term" value="P:karyogamy involved in conjugation with cellular fusion"/>
    <property type="evidence" value="ECO:0000318"/>
    <property type="project" value="GO_Central"/>
</dbReference>
<dbReference type="GO" id="GO:0048288">
    <property type="term" value="P:nuclear membrane fusion involved in karyogamy"/>
    <property type="evidence" value="ECO:0000318"/>
    <property type="project" value="GO_Central"/>
</dbReference>
<dbReference type="InterPro" id="IPR007292">
    <property type="entry name" value="Nuclear_fusion_Kar5"/>
</dbReference>
<dbReference type="PANTHER" id="PTHR28012">
    <property type="entry name" value="NUCLEAR FUSION PROTEIN KAR5"/>
    <property type="match status" value="1"/>
</dbReference>
<dbReference type="PANTHER" id="PTHR28012:SF1">
    <property type="entry name" value="NUCLEAR FUSION PROTEIN KAR5"/>
    <property type="match status" value="1"/>
</dbReference>
<dbReference type="Pfam" id="PF04163">
    <property type="entry name" value="Tht1"/>
    <property type="match status" value="1"/>
</dbReference>